<protein>
    <recommendedName>
        <fullName>Uncharacterized lipoprotein SAUSA300_0410</fullName>
    </recommendedName>
</protein>
<organism>
    <name type="scientific">Staphylococcus aureus (strain USA300)</name>
    <dbReference type="NCBI Taxonomy" id="367830"/>
    <lineage>
        <taxon>Bacteria</taxon>
        <taxon>Bacillati</taxon>
        <taxon>Bacillota</taxon>
        <taxon>Bacilli</taxon>
        <taxon>Bacillales</taxon>
        <taxon>Staphylococcaceae</taxon>
        <taxon>Staphylococcus</taxon>
    </lineage>
</organism>
<evidence type="ECO:0000255" key="1">
    <source>
        <dbReference type="PROSITE-ProRule" id="PRU00303"/>
    </source>
</evidence>
<evidence type="ECO:0000305" key="2"/>
<dbReference type="EMBL" id="CP000255">
    <property type="protein sequence ID" value="ABD21538.1"/>
    <property type="status" value="ALT_INIT"/>
    <property type="molecule type" value="Genomic_DNA"/>
</dbReference>
<dbReference type="SMR" id="Q2FJK4"/>
<dbReference type="KEGG" id="saa:SAUSA300_0410"/>
<dbReference type="HOGENOM" id="CLU_071589_0_1_9"/>
<dbReference type="Proteomes" id="UP000001939">
    <property type="component" value="Chromosome"/>
</dbReference>
<dbReference type="GO" id="GO:0005886">
    <property type="term" value="C:plasma membrane"/>
    <property type="evidence" value="ECO:0007669"/>
    <property type="project" value="UniProtKB-SubCell"/>
</dbReference>
<dbReference type="Gene3D" id="2.50.20.40">
    <property type="match status" value="1"/>
</dbReference>
<dbReference type="InterPro" id="IPR007595">
    <property type="entry name" value="Csa"/>
</dbReference>
<dbReference type="InterPro" id="IPR038641">
    <property type="entry name" value="Csa_sf"/>
</dbReference>
<dbReference type="NCBIfam" id="TIGR01742">
    <property type="entry name" value="SA_tandem_lipo"/>
    <property type="match status" value="1"/>
</dbReference>
<dbReference type="Pfam" id="PF04507">
    <property type="entry name" value="DUF576"/>
    <property type="match status" value="1"/>
</dbReference>
<dbReference type="PROSITE" id="PS51257">
    <property type="entry name" value="PROKAR_LIPOPROTEIN"/>
    <property type="match status" value="1"/>
</dbReference>
<name>Y410_STAA3</name>
<comment type="subcellular location">
    <subcellularLocation>
        <location evidence="1">Cell membrane</location>
        <topology evidence="1">Lipid-anchor</topology>
    </subcellularLocation>
</comment>
<comment type="similarity">
    <text evidence="2">Belongs to the staphylococcal tandem lipoprotein family.</text>
</comment>
<comment type="sequence caution" evidence="2">
    <conflict type="erroneous initiation">
        <sequence resource="EMBL-CDS" id="ABD21538"/>
    </conflict>
</comment>
<reference key="1">
    <citation type="journal article" date="2006" name="Lancet">
        <title>Complete genome sequence of USA300, an epidemic clone of community-acquired meticillin-resistant Staphylococcus aureus.</title>
        <authorList>
            <person name="Diep B.A."/>
            <person name="Gill S.R."/>
            <person name="Chang R.F."/>
            <person name="Phan T.H."/>
            <person name="Chen J.H."/>
            <person name="Davidson M.G."/>
            <person name="Lin F."/>
            <person name="Lin J."/>
            <person name="Carleton H.A."/>
            <person name="Mongodin E.F."/>
            <person name="Sensabaugh G.F."/>
            <person name="Perdreau-Remington F."/>
        </authorList>
    </citation>
    <scope>NUCLEOTIDE SEQUENCE [LARGE SCALE GENOMIC DNA]</scope>
    <source>
        <strain>USA300</strain>
    </source>
</reference>
<feature type="signal peptide" evidence="1">
    <location>
        <begin position="1"/>
        <end position="22"/>
    </location>
</feature>
<feature type="chain" id="PRO_0000282076" description="Uncharacterized lipoprotein SAUSA300_0410">
    <location>
        <begin position="23"/>
        <end position="257"/>
    </location>
</feature>
<feature type="lipid moiety-binding region" description="N-palmitoyl cysteine" evidence="1">
    <location>
        <position position="23"/>
    </location>
</feature>
<feature type="lipid moiety-binding region" description="S-diacylglycerol cysteine" evidence="1">
    <location>
        <position position="23"/>
    </location>
</feature>
<sequence length="257" mass="29993">MGYLKRFALYISVMILIFAIAGCGKGNETKEDSKEEQIKKSFAITLDMYPIKNLEDLYDKEGYRDSEFKKGDKGMWTIYTDFAKSNKPGELDDEGMVLNLDRNTRTAKGHYFVTTFYRNGKLPDEKNYKIEMKNNKIILLDEVKDDKLKQKIENFKFFGQYANLKELRKYNNGDVSINENVPSYDVEYKMSNKDEIVKELRSRYNISTEKSPILKMHIDGDLKGSSVGYRKLEIDFSKRENSKLSVIEFLSYKPAKK</sequence>
<keyword id="KW-1003">Cell membrane</keyword>
<keyword id="KW-0449">Lipoprotein</keyword>
<keyword id="KW-0472">Membrane</keyword>
<keyword id="KW-0564">Palmitate</keyword>
<keyword id="KW-0732">Signal</keyword>
<proteinExistence type="inferred from homology"/>
<gene>
    <name type="ordered locus">SAUSA300_0410</name>
</gene>
<accession>Q2FJK4</accession>